<sequence>MDQNKQKALAAALGQIEKQFGKGSIMRLGDSKTMDIEAISTGSLSLDVALGIGGLPCGRIVEIYGPESSGKTTLTLQVIAEAQKKGKTCAFVDAEHALDPIYAAKLGVNVDDLLISQPDTGEQALEICDMLVRSNAVDVIIVDSVAALTPKAEIEGEMGDSHVGLQARLMSQALRKLTANIKNANCLCIFINQIRMKIGVMFGSPETTTGGNALKFYASVRLDIRRIGAIKEGDEVVGNETRVKVVKNKVAPPFKQAEFQIFYGAGISKEGELVDLGVKHKLIDKAGAWYSYNGEKIGQGKANVMKLFAENKAMAGEVEARLRELLLSGAVPVDDKAAPVEAEEFDAESEQEFE</sequence>
<reference key="1">
    <citation type="journal article" date="2006" name="J. Bacteriol.">
        <title>Genome sequence of Aeromonas hydrophila ATCC 7966T: jack of all trades.</title>
        <authorList>
            <person name="Seshadri R."/>
            <person name="Joseph S.W."/>
            <person name="Chopra A.K."/>
            <person name="Sha J."/>
            <person name="Shaw J."/>
            <person name="Graf J."/>
            <person name="Haft D.H."/>
            <person name="Wu M."/>
            <person name="Ren Q."/>
            <person name="Rosovitz M.J."/>
            <person name="Madupu R."/>
            <person name="Tallon L."/>
            <person name="Kim M."/>
            <person name="Jin S."/>
            <person name="Vuong H."/>
            <person name="Stine O.C."/>
            <person name="Ali A."/>
            <person name="Horneman A.J."/>
            <person name="Heidelberg J.F."/>
        </authorList>
    </citation>
    <scope>NUCLEOTIDE SEQUENCE [LARGE SCALE GENOMIC DNA]</scope>
    <source>
        <strain>ATCC 7966 / DSM 30187 / BCRC 13018 / CCUG 14551 / JCM 1027 / KCTC 2358 / NCIMB 9240 / NCTC 8049</strain>
    </source>
</reference>
<name>RECA_AERHH</name>
<proteinExistence type="inferred from homology"/>
<accession>A0KPG3</accession>
<keyword id="KW-0067">ATP-binding</keyword>
<keyword id="KW-0963">Cytoplasm</keyword>
<keyword id="KW-0227">DNA damage</keyword>
<keyword id="KW-0233">DNA recombination</keyword>
<keyword id="KW-0234">DNA repair</keyword>
<keyword id="KW-0238">DNA-binding</keyword>
<keyword id="KW-0547">Nucleotide-binding</keyword>
<keyword id="KW-1185">Reference proteome</keyword>
<keyword id="KW-0742">SOS response</keyword>
<gene>
    <name evidence="1" type="primary">recA</name>
    <name type="ordered locus">AHA_3716</name>
</gene>
<feature type="chain" id="PRO_1000047883" description="Protein RecA">
    <location>
        <begin position="1"/>
        <end position="354"/>
    </location>
</feature>
<feature type="binding site" evidence="1">
    <location>
        <begin position="65"/>
        <end position="72"/>
    </location>
    <ligand>
        <name>ATP</name>
        <dbReference type="ChEBI" id="CHEBI:30616"/>
    </ligand>
</feature>
<protein>
    <recommendedName>
        <fullName evidence="1">Protein RecA</fullName>
    </recommendedName>
    <alternativeName>
        <fullName evidence="1">Recombinase A</fullName>
    </alternativeName>
</protein>
<organism>
    <name type="scientific">Aeromonas hydrophila subsp. hydrophila (strain ATCC 7966 / DSM 30187 / BCRC 13018 / CCUG 14551 / JCM 1027 / KCTC 2358 / NCIMB 9240 / NCTC 8049)</name>
    <dbReference type="NCBI Taxonomy" id="380703"/>
    <lineage>
        <taxon>Bacteria</taxon>
        <taxon>Pseudomonadati</taxon>
        <taxon>Pseudomonadota</taxon>
        <taxon>Gammaproteobacteria</taxon>
        <taxon>Aeromonadales</taxon>
        <taxon>Aeromonadaceae</taxon>
        <taxon>Aeromonas</taxon>
    </lineage>
</organism>
<evidence type="ECO:0000255" key="1">
    <source>
        <dbReference type="HAMAP-Rule" id="MF_00268"/>
    </source>
</evidence>
<comment type="function">
    <text evidence="1">Can catalyze the hydrolysis of ATP in the presence of single-stranded DNA, the ATP-dependent uptake of single-stranded DNA by duplex DNA, and the ATP-dependent hybridization of homologous single-stranded DNAs. It interacts with LexA causing its activation and leading to its autocatalytic cleavage.</text>
</comment>
<comment type="subcellular location">
    <subcellularLocation>
        <location evidence="1">Cytoplasm</location>
    </subcellularLocation>
</comment>
<comment type="similarity">
    <text evidence="1">Belongs to the RecA family.</text>
</comment>
<dbReference type="EMBL" id="CP000462">
    <property type="protein sequence ID" value="ABK36342.1"/>
    <property type="molecule type" value="Genomic_DNA"/>
</dbReference>
<dbReference type="RefSeq" id="WP_011707431.1">
    <property type="nucleotide sequence ID" value="NC_008570.1"/>
</dbReference>
<dbReference type="RefSeq" id="YP_858164.1">
    <property type="nucleotide sequence ID" value="NC_008570.1"/>
</dbReference>
<dbReference type="SMR" id="A0KPG3"/>
<dbReference type="STRING" id="380703.AHA_3716"/>
<dbReference type="EnsemblBacteria" id="ABK36342">
    <property type="protein sequence ID" value="ABK36342"/>
    <property type="gene ID" value="AHA_3716"/>
</dbReference>
<dbReference type="GeneID" id="4488542"/>
<dbReference type="KEGG" id="aha:AHA_3716"/>
<dbReference type="PATRIC" id="fig|380703.7.peg.3689"/>
<dbReference type="eggNOG" id="COG0468">
    <property type="taxonomic scope" value="Bacteria"/>
</dbReference>
<dbReference type="HOGENOM" id="CLU_040469_3_2_6"/>
<dbReference type="OrthoDB" id="9776733at2"/>
<dbReference type="Proteomes" id="UP000000756">
    <property type="component" value="Chromosome"/>
</dbReference>
<dbReference type="GO" id="GO:0005829">
    <property type="term" value="C:cytosol"/>
    <property type="evidence" value="ECO:0007669"/>
    <property type="project" value="TreeGrafter"/>
</dbReference>
<dbReference type="GO" id="GO:0005524">
    <property type="term" value="F:ATP binding"/>
    <property type="evidence" value="ECO:0007669"/>
    <property type="project" value="UniProtKB-UniRule"/>
</dbReference>
<dbReference type="GO" id="GO:0016887">
    <property type="term" value="F:ATP hydrolysis activity"/>
    <property type="evidence" value="ECO:0007669"/>
    <property type="project" value="InterPro"/>
</dbReference>
<dbReference type="GO" id="GO:0140664">
    <property type="term" value="F:ATP-dependent DNA damage sensor activity"/>
    <property type="evidence" value="ECO:0007669"/>
    <property type="project" value="InterPro"/>
</dbReference>
<dbReference type="GO" id="GO:0003684">
    <property type="term" value="F:damaged DNA binding"/>
    <property type="evidence" value="ECO:0007669"/>
    <property type="project" value="UniProtKB-UniRule"/>
</dbReference>
<dbReference type="GO" id="GO:0003697">
    <property type="term" value="F:single-stranded DNA binding"/>
    <property type="evidence" value="ECO:0007669"/>
    <property type="project" value="UniProtKB-UniRule"/>
</dbReference>
<dbReference type="GO" id="GO:0006310">
    <property type="term" value="P:DNA recombination"/>
    <property type="evidence" value="ECO:0007669"/>
    <property type="project" value="UniProtKB-UniRule"/>
</dbReference>
<dbReference type="GO" id="GO:0006281">
    <property type="term" value="P:DNA repair"/>
    <property type="evidence" value="ECO:0007669"/>
    <property type="project" value="UniProtKB-UniRule"/>
</dbReference>
<dbReference type="GO" id="GO:0009432">
    <property type="term" value="P:SOS response"/>
    <property type="evidence" value="ECO:0007669"/>
    <property type="project" value="UniProtKB-UniRule"/>
</dbReference>
<dbReference type="CDD" id="cd00983">
    <property type="entry name" value="RecA"/>
    <property type="match status" value="1"/>
</dbReference>
<dbReference type="FunFam" id="3.40.50.300:FF:000087">
    <property type="entry name" value="Recombinase RecA"/>
    <property type="match status" value="1"/>
</dbReference>
<dbReference type="Gene3D" id="3.40.50.300">
    <property type="entry name" value="P-loop containing nucleotide triphosphate hydrolases"/>
    <property type="match status" value="1"/>
</dbReference>
<dbReference type="HAMAP" id="MF_00268">
    <property type="entry name" value="RecA"/>
    <property type="match status" value="1"/>
</dbReference>
<dbReference type="InterPro" id="IPR003593">
    <property type="entry name" value="AAA+_ATPase"/>
</dbReference>
<dbReference type="InterPro" id="IPR013765">
    <property type="entry name" value="DNA_recomb/repair_RecA"/>
</dbReference>
<dbReference type="InterPro" id="IPR020584">
    <property type="entry name" value="DNA_recomb/repair_RecA_CS"/>
</dbReference>
<dbReference type="InterPro" id="IPR027417">
    <property type="entry name" value="P-loop_NTPase"/>
</dbReference>
<dbReference type="InterPro" id="IPR049261">
    <property type="entry name" value="RecA-like_C"/>
</dbReference>
<dbReference type="InterPro" id="IPR049428">
    <property type="entry name" value="RecA-like_N"/>
</dbReference>
<dbReference type="InterPro" id="IPR020588">
    <property type="entry name" value="RecA_ATP-bd"/>
</dbReference>
<dbReference type="InterPro" id="IPR023400">
    <property type="entry name" value="RecA_C_sf"/>
</dbReference>
<dbReference type="InterPro" id="IPR020587">
    <property type="entry name" value="RecA_monomer-monomer_interface"/>
</dbReference>
<dbReference type="NCBIfam" id="TIGR02012">
    <property type="entry name" value="tigrfam_recA"/>
    <property type="match status" value="1"/>
</dbReference>
<dbReference type="PANTHER" id="PTHR45900:SF1">
    <property type="entry name" value="MITOCHONDRIAL DNA REPAIR PROTEIN RECA HOMOLOG-RELATED"/>
    <property type="match status" value="1"/>
</dbReference>
<dbReference type="PANTHER" id="PTHR45900">
    <property type="entry name" value="RECA"/>
    <property type="match status" value="1"/>
</dbReference>
<dbReference type="Pfam" id="PF00154">
    <property type="entry name" value="RecA"/>
    <property type="match status" value="1"/>
</dbReference>
<dbReference type="Pfam" id="PF21096">
    <property type="entry name" value="RecA_C"/>
    <property type="match status" value="1"/>
</dbReference>
<dbReference type="PRINTS" id="PR00142">
    <property type="entry name" value="RECA"/>
</dbReference>
<dbReference type="SMART" id="SM00382">
    <property type="entry name" value="AAA"/>
    <property type="match status" value="1"/>
</dbReference>
<dbReference type="SUPFAM" id="SSF52540">
    <property type="entry name" value="P-loop containing nucleoside triphosphate hydrolases"/>
    <property type="match status" value="1"/>
</dbReference>
<dbReference type="SUPFAM" id="SSF54752">
    <property type="entry name" value="RecA protein, C-terminal domain"/>
    <property type="match status" value="1"/>
</dbReference>
<dbReference type="PROSITE" id="PS00321">
    <property type="entry name" value="RECA_1"/>
    <property type="match status" value="1"/>
</dbReference>
<dbReference type="PROSITE" id="PS50162">
    <property type="entry name" value="RECA_2"/>
    <property type="match status" value="1"/>
</dbReference>
<dbReference type="PROSITE" id="PS50163">
    <property type="entry name" value="RECA_3"/>
    <property type="match status" value="1"/>
</dbReference>